<feature type="chain" id="PRO_0000183200" description="UDP-glucose 4-epimerase">
    <location>
        <begin position="1"/>
        <end position="339"/>
    </location>
</feature>
<feature type="active site" description="Proton acceptor" evidence="1">
    <location>
        <position position="148"/>
    </location>
</feature>
<feature type="binding site" evidence="1">
    <location>
        <begin position="10"/>
        <end position="12"/>
    </location>
    <ligand>
        <name>NAD(+)</name>
        <dbReference type="ChEBI" id="CHEBI:57540"/>
    </ligand>
</feature>
<feature type="binding site" evidence="1">
    <location>
        <begin position="31"/>
        <end position="35"/>
    </location>
    <ligand>
        <name>NAD(+)</name>
        <dbReference type="ChEBI" id="CHEBI:57540"/>
    </ligand>
</feature>
<feature type="binding site" evidence="1">
    <location>
        <begin position="58"/>
        <end position="59"/>
    </location>
    <ligand>
        <name>NAD(+)</name>
        <dbReference type="ChEBI" id="CHEBI:57540"/>
    </ligand>
</feature>
<feature type="binding site" evidence="1">
    <location>
        <position position="80"/>
    </location>
    <ligand>
        <name>NAD(+)</name>
        <dbReference type="ChEBI" id="CHEBI:57540"/>
    </ligand>
</feature>
<feature type="binding site" evidence="1">
    <location>
        <position position="84"/>
    </location>
    <ligand>
        <name>NAD(+)</name>
        <dbReference type="ChEBI" id="CHEBI:57540"/>
    </ligand>
</feature>
<feature type="binding site" evidence="1">
    <location>
        <begin position="124"/>
        <end position="126"/>
    </location>
    <ligand>
        <name>substrate</name>
    </ligand>
</feature>
<feature type="binding site" evidence="1">
    <location>
        <position position="152"/>
    </location>
    <ligand>
        <name>NAD(+)</name>
        <dbReference type="ChEBI" id="CHEBI:57540"/>
    </ligand>
</feature>
<feature type="binding site" evidence="1">
    <location>
        <begin position="176"/>
        <end position="178"/>
    </location>
    <ligand>
        <name>substrate</name>
    </ligand>
</feature>
<feature type="binding site" evidence="1">
    <location>
        <position position="176"/>
    </location>
    <ligand>
        <name>NAD(+)</name>
        <dbReference type="ChEBI" id="CHEBI:57540"/>
    </ligand>
</feature>
<feature type="binding site" evidence="1">
    <location>
        <begin position="197"/>
        <end position="199"/>
    </location>
    <ligand>
        <name>substrate</name>
    </ligand>
</feature>
<feature type="binding site" evidence="1">
    <location>
        <position position="230"/>
    </location>
    <ligand>
        <name>substrate</name>
    </ligand>
</feature>
<feature type="binding site" evidence="1">
    <location>
        <begin position="291"/>
        <end position="294"/>
    </location>
    <ligand>
        <name>substrate</name>
    </ligand>
</feature>
<gene>
    <name evidence="8 9" type="primary">galE</name>
    <name evidence="6" type="synonym">gne</name>
    <name evidence="7" type="synonym">gneA</name>
    <name type="ordered locus">BSU38860</name>
</gene>
<proteinExistence type="evidence at protein level"/>
<evidence type="ECO:0000250" key="1">
    <source>
        <dbReference type="UniProtKB" id="Q14376"/>
    </source>
</evidence>
<evidence type="ECO:0000269" key="2">
    <source>
    </source>
</evidence>
<evidence type="ECO:0000269" key="3">
    <source>
    </source>
</evidence>
<evidence type="ECO:0000269" key="4">
    <source>
    </source>
</evidence>
<evidence type="ECO:0000269" key="5">
    <source>
    </source>
</evidence>
<evidence type="ECO:0000303" key="6">
    <source>
    </source>
</evidence>
<evidence type="ECO:0000303" key="7">
    <source>
    </source>
</evidence>
<evidence type="ECO:0000303" key="8">
    <source>
    </source>
</evidence>
<evidence type="ECO:0000303" key="9">
    <source>
    </source>
</evidence>
<evidence type="ECO:0000305" key="10"/>
<evidence type="ECO:0000305" key="11">
    <source>
    </source>
</evidence>
<evidence type="ECO:0000305" key="12">
    <source>
    </source>
</evidence>
<evidence type="ECO:0000312" key="13">
    <source>
        <dbReference type="EMBL" id="BAA11718.1"/>
    </source>
</evidence>
<evidence type="ECO:0000312" key="14">
    <source>
        <dbReference type="EMBL" id="CAA67713.1"/>
    </source>
</evidence>
<evidence type="ECO:0000312" key="15">
    <source>
        <dbReference type="EMBL" id="CAB15912.1"/>
    </source>
</evidence>
<reference evidence="14" key="1">
    <citation type="journal article" date="1996" name="FEMS Microbiol. Lett.">
        <title>Expression of a pepT homologue from Bacillus subtilis.</title>
        <authorList>
            <person name="Schroegel O."/>
            <person name="Krispin O."/>
            <person name="Allmansberger R."/>
        </authorList>
    </citation>
    <scope>NUCLEOTIDE SEQUENCE [GENOMIC DNA]</scope>
    <source>
        <strain>168</strain>
    </source>
</reference>
<reference evidence="13" key="2">
    <citation type="journal article" date="1996" name="Microbiology">
        <title>Sequencing of a 65 kb region of the Bacillus subtilis genome containing the lic and cel loci, and creation of a 177 kb contig covering the gnt-sacXY region.</title>
        <authorList>
            <person name="Yoshida K."/>
            <person name="Shindo K."/>
            <person name="Sano H."/>
            <person name="Seki S."/>
            <person name="Fujimura M."/>
            <person name="Yanai N."/>
            <person name="Miwa Y."/>
            <person name="Fujita Y."/>
        </authorList>
    </citation>
    <scope>NUCLEOTIDE SEQUENCE [GENOMIC DNA]</scope>
    <source>
        <strain>168 / BGSC1A1</strain>
    </source>
</reference>
<reference evidence="15" key="3">
    <citation type="journal article" date="1997" name="Nature">
        <title>The complete genome sequence of the Gram-positive bacterium Bacillus subtilis.</title>
        <authorList>
            <person name="Kunst F."/>
            <person name="Ogasawara N."/>
            <person name="Moszer I."/>
            <person name="Albertini A.M."/>
            <person name="Alloni G."/>
            <person name="Azevedo V."/>
            <person name="Bertero M.G."/>
            <person name="Bessieres P."/>
            <person name="Bolotin A."/>
            <person name="Borchert S."/>
            <person name="Borriss R."/>
            <person name="Boursier L."/>
            <person name="Brans A."/>
            <person name="Braun M."/>
            <person name="Brignell S.C."/>
            <person name="Bron S."/>
            <person name="Brouillet S."/>
            <person name="Bruschi C.V."/>
            <person name="Caldwell B."/>
            <person name="Capuano V."/>
            <person name="Carter N.M."/>
            <person name="Choi S.-K."/>
            <person name="Codani J.-J."/>
            <person name="Connerton I.F."/>
            <person name="Cummings N.J."/>
            <person name="Daniel R.A."/>
            <person name="Denizot F."/>
            <person name="Devine K.M."/>
            <person name="Duesterhoeft A."/>
            <person name="Ehrlich S.D."/>
            <person name="Emmerson P.T."/>
            <person name="Entian K.-D."/>
            <person name="Errington J."/>
            <person name="Fabret C."/>
            <person name="Ferrari E."/>
            <person name="Foulger D."/>
            <person name="Fritz C."/>
            <person name="Fujita M."/>
            <person name="Fujita Y."/>
            <person name="Fuma S."/>
            <person name="Galizzi A."/>
            <person name="Galleron N."/>
            <person name="Ghim S.-Y."/>
            <person name="Glaser P."/>
            <person name="Goffeau A."/>
            <person name="Golightly E.J."/>
            <person name="Grandi G."/>
            <person name="Guiseppi G."/>
            <person name="Guy B.J."/>
            <person name="Haga K."/>
            <person name="Haiech J."/>
            <person name="Harwood C.R."/>
            <person name="Henaut A."/>
            <person name="Hilbert H."/>
            <person name="Holsappel S."/>
            <person name="Hosono S."/>
            <person name="Hullo M.-F."/>
            <person name="Itaya M."/>
            <person name="Jones L.-M."/>
            <person name="Joris B."/>
            <person name="Karamata D."/>
            <person name="Kasahara Y."/>
            <person name="Klaerr-Blanchard M."/>
            <person name="Klein C."/>
            <person name="Kobayashi Y."/>
            <person name="Koetter P."/>
            <person name="Koningstein G."/>
            <person name="Krogh S."/>
            <person name="Kumano M."/>
            <person name="Kurita K."/>
            <person name="Lapidus A."/>
            <person name="Lardinois S."/>
            <person name="Lauber J."/>
            <person name="Lazarevic V."/>
            <person name="Lee S.-M."/>
            <person name="Levine A."/>
            <person name="Liu H."/>
            <person name="Masuda S."/>
            <person name="Mauel C."/>
            <person name="Medigue C."/>
            <person name="Medina N."/>
            <person name="Mellado R.P."/>
            <person name="Mizuno M."/>
            <person name="Moestl D."/>
            <person name="Nakai S."/>
            <person name="Noback M."/>
            <person name="Noone D."/>
            <person name="O'Reilly M."/>
            <person name="Ogawa K."/>
            <person name="Ogiwara A."/>
            <person name="Oudega B."/>
            <person name="Park S.-H."/>
            <person name="Parro V."/>
            <person name="Pohl T.M."/>
            <person name="Portetelle D."/>
            <person name="Porwollik S."/>
            <person name="Prescott A.M."/>
            <person name="Presecan E."/>
            <person name="Pujic P."/>
            <person name="Purnelle B."/>
            <person name="Rapoport G."/>
            <person name="Rey M."/>
            <person name="Reynolds S."/>
            <person name="Rieger M."/>
            <person name="Rivolta C."/>
            <person name="Rocha E."/>
            <person name="Roche B."/>
            <person name="Rose M."/>
            <person name="Sadaie Y."/>
            <person name="Sato T."/>
            <person name="Scanlan E."/>
            <person name="Schleich S."/>
            <person name="Schroeter R."/>
            <person name="Scoffone F."/>
            <person name="Sekiguchi J."/>
            <person name="Sekowska A."/>
            <person name="Seror S.J."/>
            <person name="Serror P."/>
            <person name="Shin B.-S."/>
            <person name="Soldo B."/>
            <person name="Sorokin A."/>
            <person name="Tacconi E."/>
            <person name="Takagi T."/>
            <person name="Takahashi H."/>
            <person name="Takemaru K."/>
            <person name="Takeuchi M."/>
            <person name="Tamakoshi A."/>
            <person name="Tanaka T."/>
            <person name="Terpstra P."/>
            <person name="Tognoni A."/>
            <person name="Tosato V."/>
            <person name="Uchiyama S."/>
            <person name="Vandenbol M."/>
            <person name="Vannier F."/>
            <person name="Vassarotti A."/>
            <person name="Viari A."/>
            <person name="Wambutt R."/>
            <person name="Wedler E."/>
            <person name="Wedler H."/>
            <person name="Weitzenegger T."/>
            <person name="Winters P."/>
            <person name="Wipat A."/>
            <person name="Yamamoto H."/>
            <person name="Yamane K."/>
            <person name="Yasumoto K."/>
            <person name="Yata K."/>
            <person name="Yoshida K."/>
            <person name="Yoshikawa H.-F."/>
            <person name="Zumstein E."/>
            <person name="Yoshikawa H."/>
            <person name="Danchin A."/>
        </authorList>
    </citation>
    <scope>NUCLEOTIDE SEQUENCE [LARGE SCALE GENOMIC DNA]</scope>
    <source>
        <strain>168</strain>
    </source>
</reference>
<reference key="4">
    <citation type="journal article" date="1991" name="J. Gen. Microbiol.">
        <title>Genetic and biochemical characterization of Bacillus subtilis 168 mutants specifically blocked in the synthesis of the teichoic acid poly(3-O-beta-D-glucopyranosyl-N-acetylgalactosamine 1-phosphate): gneA, a new locus, is associated with UDP-N-acetylglucosamine 4-epimerase activity.</title>
        <authorList>
            <person name="Estrela A.I."/>
            <person name="Pooley H.M."/>
            <person name="de Lencastre H."/>
            <person name="Karamata D."/>
        </authorList>
    </citation>
    <scope>FUNCTION</scope>
    <scope>DISRUPTION PHENOTYPE</scope>
    <source>
        <strain>168</strain>
    </source>
</reference>
<reference key="5">
    <citation type="journal article" date="1998" name="J. Bacteriol.">
        <title>The Bacillus subtilis galE gene is essential in the presence of glucose and galactose.</title>
        <authorList>
            <person name="Krispin O."/>
            <person name="Allmansberger R."/>
        </authorList>
    </citation>
    <scope>FUNCTION</scope>
    <scope>INDUCTION</scope>
    <source>
        <strain>168</strain>
    </source>
</reference>
<reference key="6">
    <citation type="journal article" date="2003" name="Gene">
        <title>The Bacillus subtilis Gne (GneA, GalE) protein can catalyse UDP-glucose as well as UDP-N-acetylglucosamine 4-epimerisation.</title>
        <authorList>
            <person name="Soldo B."/>
            <person name="Scotti C."/>
            <person name="Karamata D."/>
            <person name="Lazarevic V."/>
        </authorList>
    </citation>
    <scope>FUNCTION</scope>
    <scope>CATALYTIC ACTIVITY</scope>
</reference>
<reference key="7">
    <citation type="journal article" date="2015" name="Front. Microbiol.">
        <title>Tetracycline hypersensitivity of an ezrA mutant links GalE and TseB (YpmB) to cell division.</title>
        <authorList>
            <person name="Gamba P."/>
            <person name="Rietkoetter E."/>
            <person name="Daniel R.A."/>
            <person name="Hamoen L.W."/>
        </authorList>
    </citation>
    <scope>FUNCTION IN CELL DIVISION</scope>
    <scope>DISRUPTION PHENOTYPE</scope>
</reference>
<comment type="function">
    <text evidence="2 3 4 5">Catalyzes two distinct but analogous reactions: the reversible epimerization of UDP-glucose to UDP-galactose and the reversible epimerization of UDP-N-acetylglucosamine to UDP-N-acetylgalactosamine (PubMed:14597172). The enzyme is more efficient in catalyzing the interconversion between unacetylated than between corresponding N-acetylated substrates (PubMed:14597172). Essential for growth in media containing either glucose or galactose (PubMed:9555917). May protect the cell from the toxic effects of galactose and glucose or derivatives of both sugars (PubMed:9555917). Involved in the biosynthesis of teichoic acids via the formation of UDP-N-acetylgalactosamine (PubMed:14597172, PubMed:1906927). Influences cell division (PubMed:25954268).</text>
</comment>
<comment type="catalytic activity">
    <reaction evidence="2">
        <text>UDP-alpha-D-glucose = UDP-alpha-D-galactose</text>
        <dbReference type="Rhea" id="RHEA:22168"/>
        <dbReference type="ChEBI" id="CHEBI:58885"/>
        <dbReference type="ChEBI" id="CHEBI:66914"/>
        <dbReference type="EC" id="5.1.3.2"/>
    </reaction>
</comment>
<comment type="catalytic activity">
    <reaction evidence="2 12">
        <text>UDP-N-acetyl-alpha-D-glucosamine = UDP-N-acetyl-alpha-D-galactosamine</text>
        <dbReference type="Rhea" id="RHEA:20517"/>
        <dbReference type="ChEBI" id="CHEBI:57705"/>
        <dbReference type="ChEBI" id="CHEBI:67138"/>
        <dbReference type="EC" id="5.1.3.7"/>
    </reaction>
</comment>
<comment type="cofactor">
    <cofactor evidence="1">
        <name>NAD(+)</name>
        <dbReference type="ChEBI" id="CHEBI:57540"/>
    </cofactor>
</comment>
<comment type="pathway">
    <text evidence="11 12">Cell wall biogenesis; teichoic acid biosynthesis.</text>
</comment>
<comment type="induction">
    <text evidence="5">Transcription is repressed by glucose but is not influenced by galactose.</text>
</comment>
<comment type="disruption phenotype">
    <text evidence="3 4">Mutant shows a greatly reduced galactosamine content, abnormal colony morphology and is devoid of UDP-N-acetylglucosamine 4-epimerase activity (PubMed:1906927). Disruption of the gene can suppress the tetracycline sensitivity of the ezrA mutant (PubMed:25954268).</text>
</comment>
<comment type="miscellaneous">
    <text evidence="2">It was initially assumed that galE and gneA were separate genes, coding for two different enzymes, but it was later shown that they are one and the same.</text>
</comment>
<comment type="similarity">
    <text evidence="10">Belongs to the NAD(P)-dependent epimerase/dehydratase family.</text>
</comment>
<protein>
    <recommendedName>
        <fullName evidence="8">UDP-glucose 4-epimerase</fullName>
        <ecNumber evidence="2">5.1.3.2</ecNumber>
    </recommendedName>
    <alternativeName>
        <fullName evidence="7">UDP-N-acetylglucosamine 4-epimerase</fullName>
        <shortName evidence="7">UDP-GlcNAc 4-epimerase</shortName>
        <ecNumber evidence="2 12">5.1.3.7</ecNumber>
    </alternativeName>
</protein>
<accession>P55180</accession>
<name>GALE_BACSU</name>
<organism>
    <name type="scientific">Bacillus subtilis (strain 168)</name>
    <dbReference type="NCBI Taxonomy" id="224308"/>
    <lineage>
        <taxon>Bacteria</taxon>
        <taxon>Bacillati</taxon>
        <taxon>Bacillota</taxon>
        <taxon>Bacilli</taxon>
        <taxon>Bacillales</taxon>
        <taxon>Bacillaceae</taxon>
        <taxon>Bacillus</taxon>
    </lineage>
</organism>
<dbReference type="EC" id="5.1.3.2" evidence="2"/>
<dbReference type="EC" id="5.1.3.7" evidence="2 12"/>
<dbReference type="EMBL" id="X99339">
    <property type="protein sequence ID" value="CAA67713.1"/>
    <property type="molecule type" value="Genomic_DNA"/>
</dbReference>
<dbReference type="EMBL" id="D83026">
    <property type="protein sequence ID" value="BAA11718.1"/>
    <property type="molecule type" value="Genomic_DNA"/>
</dbReference>
<dbReference type="EMBL" id="AL009126">
    <property type="protein sequence ID" value="CAB15912.1"/>
    <property type="molecule type" value="Genomic_DNA"/>
</dbReference>
<dbReference type="PIR" id="D69628">
    <property type="entry name" value="D69628"/>
</dbReference>
<dbReference type="RefSeq" id="NP_391765.1">
    <property type="nucleotide sequence ID" value="NC_000964.3"/>
</dbReference>
<dbReference type="RefSeq" id="WP_003244356.1">
    <property type="nucleotide sequence ID" value="NZ_OZ025638.1"/>
</dbReference>
<dbReference type="SMR" id="P55180"/>
<dbReference type="FunCoup" id="P55180">
    <property type="interactions" value="361"/>
</dbReference>
<dbReference type="IntAct" id="P55180">
    <property type="interactions" value="1"/>
</dbReference>
<dbReference type="MINT" id="P55180"/>
<dbReference type="STRING" id="224308.BSU38860"/>
<dbReference type="jPOST" id="P55180"/>
<dbReference type="PaxDb" id="224308-BSU38860"/>
<dbReference type="EnsemblBacteria" id="CAB15912">
    <property type="protein sequence ID" value="CAB15912"/>
    <property type="gene ID" value="BSU_38860"/>
</dbReference>
<dbReference type="GeneID" id="937420"/>
<dbReference type="KEGG" id="bsu:BSU38860"/>
<dbReference type="PATRIC" id="fig|224308.179.peg.4205"/>
<dbReference type="eggNOG" id="COG1087">
    <property type="taxonomic scope" value="Bacteria"/>
</dbReference>
<dbReference type="InParanoid" id="P55180"/>
<dbReference type="OrthoDB" id="9801785at2"/>
<dbReference type="PhylomeDB" id="P55180"/>
<dbReference type="BioCyc" id="BSUB:BSU38860-MONOMER"/>
<dbReference type="BioCyc" id="MetaCyc:BSU38860-MONOMER"/>
<dbReference type="UniPathway" id="UPA00632"/>
<dbReference type="Proteomes" id="UP000001570">
    <property type="component" value="Chromosome"/>
</dbReference>
<dbReference type="GO" id="GO:0005829">
    <property type="term" value="C:cytosol"/>
    <property type="evidence" value="ECO:0000318"/>
    <property type="project" value="GO_Central"/>
</dbReference>
<dbReference type="GO" id="GO:0003978">
    <property type="term" value="F:UDP-glucose 4-epimerase activity"/>
    <property type="evidence" value="ECO:0000318"/>
    <property type="project" value="GO_Central"/>
</dbReference>
<dbReference type="GO" id="GO:0003974">
    <property type="term" value="F:UDP-N-acetylglucosamine 4-epimerase activity"/>
    <property type="evidence" value="ECO:0007669"/>
    <property type="project" value="RHEA"/>
</dbReference>
<dbReference type="GO" id="GO:0071555">
    <property type="term" value="P:cell wall organization"/>
    <property type="evidence" value="ECO:0007669"/>
    <property type="project" value="UniProtKB-KW"/>
</dbReference>
<dbReference type="GO" id="GO:0006012">
    <property type="term" value="P:galactose metabolic process"/>
    <property type="evidence" value="ECO:0007669"/>
    <property type="project" value="UniProtKB-UniPathway"/>
</dbReference>
<dbReference type="GO" id="GO:0005996">
    <property type="term" value="P:monosaccharide metabolic process"/>
    <property type="evidence" value="ECO:0000318"/>
    <property type="project" value="GO_Central"/>
</dbReference>
<dbReference type="GO" id="GO:0019350">
    <property type="term" value="P:teichoic acid biosynthetic process"/>
    <property type="evidence" value="ECO:0007669"/>
    <property type="project" value="UniProtKB-KW"/>
</dbReference>
<dbReference type="CDD" id="cd05247">
    <property type="entry name" value="UDP_G4E_1_SDR_e"/>
    <property type="match status" value="1"/>
</dbReference>
<dbReference type="FunFam" id="3.40.50.720:FF:000040">
    <property type="entry name" value="UDP-glucose 4-epimerase"/>
    <property type="match status" value="1"/>
</dbReference>
<dbReference type="Gene3D" id="3.40.50.720">
    <property type="entry name" value="NAD(P)-binding Rossmann-like Domain"/>
    <property type="match status" value="1"/>
</dbReference>
<dbReference type="Gene3D" id="3.90.25.10">
    <property type="entry name" value="UDP-galactose 4-epimerase, domain 1"/>
    <property type="match status" value="1"/>
</dbReference>
<dbReference type="InterPro" id="IPR016040">
    <property type="entry name" value="NAD(P)-bd_dom"/>
</dbReference>
<dbReference type="InterPro" id="IPR036291">
    <property type="entry name" value="NAD(P)-bd_dom_sf"/>
</dbReference>
<dbReference type="InterPro" id="IPR005886">
    <property type="entry name" value="UDP_G4E"/>
</dbReference>
<dbReference type="NCBIfam" id="TIGR01179">
    <property type="entry name" value="galE"/>
    <property type="match status" value="1"/>
</dbReference>
<dbReference type="NCBIfam" id="NF007956">
    <property type="entry name" value="PRK10675.1"/>
    <property type="match status" value="1"/>
</dbReference>
<dbReference type="PANTHER" id="PTHR43725">
    <property type="entry name" value="UDP-GLUCOSE 4-EPIMERASE"/>
    <property type="match status" value="1"/>
</dbReference>
<dbReference type="PANTHER" id="PTHR43725:SF47">
    <property type="entry name" value="UDP-GLUCOSE 4-EPIMERASE"/>
    <property type="match status" value="1"/>
</dbReference>
<dbReference type="Pfam" id="PF16363">
    <property type="entry name" value="GDP_Man_Dehyd"/>
    <property type="match status" value="1"/>
</dbReference>
<dbReference type="PRINTS" id="PR01713">
    <property type="entry name" value="NUCEPIMERASE"/>
</dbReference>
<dbReference type="SUPFAM" id="SSF51735">
    <property type="entry name" value="NAD(P)-binding Rossmann-fold domains"/>
    <property type="match status" value="1"/>
</dbReference>
<sequence length="339" mass="37009">MAILVTGGAGYIGSHTCVELLNSGYEIVVLDNLSNSSAEALNRVKEITGKDLTFYEADLLDREAVDSVFAENEIEAVIHFAGLKAVGESVAIPLKYYHNNLTGTFILCEAMEKYGVKKIVFSSSATVYGVPETSPITEDFPLGATNPYGQTKLMLEQILRDLHTADNEWSVALLRYFNPFGAHPSGRIGEDPNGIPNNLMPYVAQVAVGKLEQLSVFGNDYPTKDGTGVRDYIHVVDLAEGHVKALEKVLNSTGADAYNLGTGTGYSVLEMVKAFEKVSGKEVPYRFADRRPGDIATCFADPAKAKRELGWEAKRGLEEMCADSWRWQSSNVNGYKSAE</sequence>
<keyword id="KW-0119">Carbohydrate metabolism</keyword>
<keyword id="KW-0961">Cell wall biogenesis/degradation</keyword>
<keyword id="KW-0413">Isomerase</keyword>
<keyword id="KW-0520">NAD</keyword>
<keyword id="KW-1185">Reference proteome</keyword>
<keyword id="KW-0777">Teichoic acid biosynthesis</keyword>